<proteinExistence type="inferred from homology"/>
<accession>Q5LWJ5</accession>
<reference key="1">
    <citation type="journal article" date="2004" name="Nature">
        <title>Genome sequence of Silicibacter pomeroyi reveals adaptations to the marine environment.</title>
        <authorList>
            <person name="Moran M.A."/>
            <person name="Buchan A."/>
            <person name="Gonzalez J.M."/>
            <person name="Heidelberg J.F."/>
            <person name="Whitman W.B."/>
            <person name="Kiene R.P."/>
            <person name="Henriksen J.R."/>
            <person name="King G.M."/>
            <person name="Belas R."/>
            <person name="Fuqua C."/>
            <person name="Brinkac L.M."/>
            <person name="Lewis M."/>
            <person name="Johri S."/>
            <person name="Weaver B."/>
            <person name="Pai G."/>
            <person name="Eisen J.A."/>
            <person name="Rahe E."/>
            <person name="Sheldon W.M."/>
            <person name="Ye W."/>
            <person name="Miller T.R."/>
            <person name="Carlton J."/>
            <person name="Rasko D.A."/>
            <person name="Paulsen I.T."/>
            <person name="Ren Q."/>
            <person name="Daugherty S.C."/>
            <person name="DeBoy R.T."/>
            <person name="Dodson R.J."/>
            <person name="Durkin A.S."/>
            <person name="Madupu R."/>
            <person name="Nelson W.C."/>
            <person name="Sullivan S.A."/>
            <person name="Rosovitz M.J."/>
            <person name="Haft D.H."/>
            <person name="Selengut J."/>
            <person name="Ward N."/>
        </authorList>
    </citation>
    <scope>NUCLEOTIDE SEQUENCE [LARGE SCALE GENOMIC DNA]</scope>
    <source>
        <strain>ATCC 700808 / DSM 15171 / DSS-3</strain>
    </source>
</reference>
<reference key="2">
    <citation type="journal article" date="2014" name="Stand. Genomic Sci.">
        <title>An updated genome annotation for the model marine bacterium Ruegeria pomeroyi DSS-3.</title>
        <authorList>
            <person name="Rivers A.R."/>
            <person name="Smith C.B."/>
            <person name="Moran M.A."/>
        </authorList>
    </citation>
    <scope>GENOME REANNOTATION</scope>
    <source>
        <strain>ATCC 700808 / DSM 15171 / DSS-3</strain>
    </source>
</reference>
<feature type="chain" id="PRO_0000070881" description="Chaperone protein DnaJ">
    <location>
        <begin position="1"/>
        <end position="381"/>
    </location>
</feature>
<feature type="domain" description="J" evidence="1">
    <location>
        <begin position="5"/>
        <end position="70"/>
    </location>
</feature>
<feature type="repeat" description="CXXCXGXG motif">
    <location>
        <begin position="153"/>
        <end position="160"/>
    </location>
</feature>
<feature type="repeat" description="CXXCXGXG motif">
    <location>
        <begin position="170"/>
        <end position="177"/>
    </location>
</feature>
<feature type="repeat" description="CXXCXGXG motif">
    <location>
        <begin position="192"/>
        <end position="199"/>
    </location>
</feature>
<feature type="repeat" description="CXXCXGXG motif">
    <location>
        <begin position="206"/>
        <end position="213"/>
    </location>
</feature>
<feature type="zinc finger region" description="CR-type" evidence="1">
    <location>
        <begin position="140"/>
        <end position="218"/>
    </location>
</feature>
<feature type="binding site" evidence="1">
    <location>
        <position position="153"/>
    </location>
    <ligand>
        <name>Zn(2+)</name>
        <dbReference type="ChEBI" id="CHEBI:29105"/>
        <label>1</label>
    </ligand>
</feature>
<feature type="binding site" evidence="1">
    <location>
        <position position="156"/>
    </location>
    <ligand>
        <name>Zn(2+)</name>
        <dbReference type="ChEBI" id="CHEBI:29105"/>
        <label>1</label>
    </ligand>
</feature>
<feature type="binding site" evidence="1">
    <location>
        <position position="170"/>
    </location>
    <ligand>
        <name>Zn(2+)</name>
        <dbReference type="ChEBI" id="CHEBI:29105"/>
        <label>2</label>
    </ligand>
</feature>
<feature type="binding site" evidence="1">
    <location>
        <position position="173"/>
    </location>
    <ligand>
        <name>Zn(2+)</name>
        <dbReference type="ChEBI" id="CHEBI:29105"/>
        <label>2</label>
    </ligand>
</feature>
<feature type="binding site" evidence="1">
    <location>
        <position position="192"/>
    </location>
    <ligand>
        <name>Zn(2+)</name>
        <dbReference type="ChEBI" id="CHEBI:29105"/>
        <label>2</label>
    </ligand>
</feature>
<feature type="binding site" evidence="1">
    <location>
        <position position="195"/>
    </location>
    <ligand>
        <name>Zn(2+)</name>
        <dbReference type="ChEBI" id="CHEBI:29105"/>
        <label>2</label>
    </ligand>
</feature>
<feature type="binding site" evidence="1">
    <location>
        <position position="206"/>
    </location>
    <ligand>
        <name>Zn(2+)</name>
        <dbReference type="ChEBI" id="CHEBI:29105"/>
        <label>1</label>
    </ligand>
</feature>
<feature type="binding site" evidence="1">
    <location>
        <position position="209"/>
    </location>
    <ligand>
        <name>Zn(2+)</name>
        <dbReference type="ChEBI" id="CHEBI:29105"/>
        <label>1</label>
    </ligand>
</feature>
<gene>
    <name evidence="1" type="primary">dnaJ</name>
    <name type="ordered locus">SPO0044</name>
</gene>
<comment type="function">
    <text evidence="1">Participates actively in the response to hyperosmotic and heat shock by preventing the aggregation of stress-denatured proteins and by disaggregating proteins, also in an autonomous, DnaK-independent fashion. Unfolded proteins bind initially to DnaJ; upon interaction with the DnaJ-bound protein, DnaK hydrolyzes its bound ATP, resulting in the formation of a stable complex. GrpE releases ADP from DnaK; ATP binding to DnaK triggers the release of the substrate protein, thus completing the reaction cycle. Several rounds of ATP-dependent interactions between DnaJ, DnaK and GrpE are required for fully efficient folding. Also involved, together with DnaK and GrpE, in the DNA replication of plasmids through activation of initiation proteins.</text>
</comment>
<comment type="cofactor">
    <cofactor evidence="1">
        <name>Zn(2+)</name>
        <dbReference type="ChEBI" id="CHEBI:29105"/>
    </cofactor>
    <text evidence="1">Binds 2 Zn(2+) ions per monomer.</text>
</comment>
<comment type="subunit">
    <text evidence="1">Homodimer.</text>
</comment>
<comment type="subcellular location">
    <subcellularLocation>
        <location evidence="1">Cytoplasm</location>
    </subcellularLocation>
</comment>
<comment type="domain">
    <text evidence="1">The J domain is necessary and sufficient to stimulate DnaK ATPase activity. Zinc center 1 plays an important role in the autonomous, DnaK-independent chaperone activity of DnaJ. Zinc center 2 is essential for interaction with DnaK and for DnaJ activity.</text>
</comment>
<comment type="similarity">
    <text evidence="1">Belongs to the DnaJ family.</text>
</comment>
<sequence length="381" mass="40662">MSKRDYYDVLGVSKGASADEIKKAYRGKAKELHPDRNKDNPDAESLFKEVNEAYEVLKDAEKKAAYDRFGHAAFEGGMGGGQRPGGGFGSGDFSSAFSDVFEDLFGDFMGGQRGGGGRRAARGSDLRYNLRVTLEEAFSGLQKTINVPTAVACSSCEGTGAEGGVEPTTCPTCSGMGKVRAQQGFFTVERTCPTCSGLGQIIKNPCKSCRGQGRVEKDRALSVNIPAGVETGTRIRLAGEGEAGMRGGPPGDLYIFVEVAKHELFERDGVNLYCRVPVSMAKAALGGAIEVPTIDGGRGRVQVPAGSQSGRQMRLRSKGMPALRGGGIGDMFIELAVETPVNLTSKQKDLLREFDELSEDNNPETKSFFSSVKSFWDGMKG</sequence>
<organism>
    <name type="scientific">Ruegeria pomeroyi (strain ATCC 700808 / DSM 15171 / DSS-3)</name>
    <name type="common">Silicibacter pomeroyi</name>
    <dbReference type="NCBI Taxonomy" id="246200"/>
    <lineage>
        <taxon>Bacteria</taxon>
        <taxon>Pseudomonadati</taxon>
        <taxon>Pseudomonadota</taxon>
        <taxon>Alphaproteobacteria</taxon>
        <taxon>Rhodobacterales</taxon>
        <taxon>Roseobacteraceae</taxon>
        <taxon>Ruegeria</taxon>
    </lineage>
</organism>
<dbReference type="EMBL" id="CP000031">
    <property type="protein sequence ID" value="AAV93375.1"/>
    <property type="molecule type" value="Genomic_DNA"/>
</dbReference>
<dbReference type="RefSeq" id="WP_011045816.1">
    <property type="nucleotide sequence ID" value="NC_003911.12"/>
</dbReference>
<dbReference type="SMR" id="Q5LWJ5"/>
<dbReference type="STRING" id="246200.SPO0044"/>
<dbReference type="PaxDb" id="246200-SPO0044"/>
<dbReference type="KEGG" id="sil:SPO0044"/>
<dbReference type="eggNOG" id="COG0484">
    <property type="taxonomic scope" value="Bacteria"/>
</dbReference>
<dbReference type="HOGENOM" id="CLU_017633_0_7_5"/>
<dbReference type="OrthoDB" id="9779889at2"/>
<dbReference type="Proteomes" id="UP000001023">
    <property type="component" value="Chromosome"/>
</dbReference>
<dbReference type="GO" id="GO:0005737">
    <property type="term" value="C:cytoplasm"/>
    <property type="evidence" value="ECO:0007669"/>
    <property type="project" value="UniProtKB-SubCell"/>
</dbReference>
<dbReference type="GO" id="GO:0005524">
    <property type="term" value="F:ATP binding"/>
    <property type="evidence" value="ECO:0007669"/>
    <property type="project" value="InterPro"/>
</dbReference>
<dbReference type="GO" id="GO:0031072">
    <property type="term" value="F:heat shock protein binding"/>
    <property type="evidence" value="ECO:0007669"/>
    <property type="project" value="InterPro"/>
</dbReference>
<dbReference type="GO" id="GO:0051082">
    <property type="term" value="F:unfolded protein binding"/>
    <property type="evidence" value="ECO:0007669"/>
    <property type="project" value="UniProtKB-UniRule"/>
</dbReference>
<dbReference type="GO" id="GO:0008270">
    <property type="term" value="F:zinc ion binding"/>
    <property type="evidence" value="ECO:0007669"/>
    <property type="project" value="UniProtKB-UniRule"/>
</dbReference>
<dbReference type="GO" id="GO:0051085">
    <property type="term" value="P:chaperone cofactor-dependent protein refolding"/>
    <property type="evidence" value="ECO:0007669"/>
    <property type="project" value="TreeGrafter"/>
</dbReference>
<dbReference type="GO" id="GO:0006260">
    <property type="term" value="P:DNA replication"/>
    <property type="evidence" value="ECO:0007669"/>
    <property type="project" value="UniProtKB-KW"/>
</dbReference>
<dbReference type="GO" id="GO:0042026">
    <property type="term" value="P:protein refolding"/>
    <property type="evidence" value="ECO:0007669"/>
    <property type="project" value="TreeGrafter"/>
</dbReference>
<dbReference type="GO" id="GO:0009408">
    <property type="term" value="P:response to heat"/>
    <property type="evidence" value="ECO:0007669"/>
    <property type="project" value="InterPro"/>
</dbReference>
<dbReference type="CDD" id="cd06257">
    <property type="entry name" value="DnaJ"/>
    <property type="match status" value="1"/>
</dbReference>
<dbReference type="CDD" id="cd10747">
    <property type="entry name" value="DnaJ_C"/>
    <property type="match status" value="1"/>
</dbReference>
<dbReference type="CDD" id="cd10719">
    <property type="entry name" value="DnaJ_zf"/>
    <property type="match status" value="1"/>
</dbReference>
<dbReference type="FunFam" id="1.10.287.110:FF:000034">
    <property type="entry name" value="Chaperone protein DnaJ"/>
    <property type="match status" value="1"/>
</dbReference>
<dbReference type="FunFam" id="2.10.230.10:FF:000002">
    <property type="entry name" value="Molecular chaperone DnaJ"/>
    <property type="match status" value="1"/>
</dbReference>
<dbReference type="FunFam" id="2.60.260.20:FF:000004">
    <property type="entry name" value="Molecular chaperone DnaJ"/>
    <property type="match status" value="1"/>
</dbReference>
<dbReference type="Gene3D" id="1.10.287.110">
    <property type="entry name" value="DnaJ domain"/>
    <property type="match status" value="1"/>
</dbReference>
<dbReference type="Gene3D" id="2.10.230.10">
    <property type="entry name" value="Heat shock protein DnaJ, cysteine-rich domain"/>
    <property type="match status" value="1"/>
</dbReference>
<dbReference type="Gene3D" id="2.60.260.20">
    <property type="entry name" value="Urease metallochaperone UreE, N-terminal domain"/>
    <property type="match status" value="2"/>
</dbReference>
<dbReference type="HAMAP" id="MF_01152">
    <property type="entry name" value="DnaJ"/>
    <property type="match status" value="1"/>
</dbReference>
<dbReference type="InterPro" id="IPR012724">
    <property type="entry name" value="DnaJ"/>
</dbReference>
<dbReference type="InterPro" id="IPR002939">
    <property type="entry name" value="DnaJ_C"/>
</dbReference>
<dbReference type="InterPro" id="IPR001623">
    <property type="entry name" value="DnaJ_domain"/>
</dbReference>
<dbReference type="InterPro" id="IPR018253">
    <property type="entry name" value="DnaJ_domain_CS"/>
</dbReference>
<dbReference type="InterPro" id="IPR008971">
    <property type="entry name" value="HSP40/DnaJ_pept-bd"/>
</dbReference>
<dbReference type="InterPro" id="IPR001305">
    <property type="entry name" value="HSP_DnaJ_Cys-rich_dom"/>
</dbReference>
<dbReference type="InterPro" id="IPR036410">
    <property type="entry name" value="HSP_DnaJ_Cys-rich_dom_sf"/>
</dbReference>
<dbReference type="InterPro" id="IPR036869">
    <property type="entry name" value="J_dom_sf"/>
</dbReference>
<dbReference type="NCBIfam" id="TIGR02349">
    <property type="entry name" value="DnaJ_bact"/>
    <property type="match status" value="1"/>
</dbReference>
<dbReference type="NCBIfam" id="NF008035">
    <property type="entry name" value="PRK10767.1"/>
    <property type="match status" value="1"/>
</dbReference>
<dbReference type="PANTHER" id="PTHR43096:SF48">
    <property type="entry name" value="CHAPERONE PROTEIN DNAJ"/>
    <property type="match status" value="1"/>
</dbReference>
<dbReference type="PANTHER" id="PTHR43096">
    <property type="entry name" value="DNAJ HOMOLOG 1, MITOCHONDRIAL-RELATED"/>
    <property type="match status" value="1"/>
</dbReference>
<dbReference type="Pfam" id="PF00226">
    <property type="entry name" value="DnaJ"/>
    <property type="match status" value="1"/>
</dbReference>
<dbReference type="Pfam" id="PF01556">
    <property type="entry name" value="DnaJ_C"/>
    <property type="match status" value="1"/>
</dbReference>
<dbReference type="Pfam" id="PF00684">
    <property type="entry name" value="DnaJ_CXXCXGXG"/>
    <property type="match status" value="1"/>
</dbReference>
<dbReference type="PRINTS" id="PR00625">
    <property type="entry name" value="JDOMAIN"/>
</dbReference>
<dbReference type="SMART" id="SM00271">
    <property type="entry name" value="DnaJ"/>
    <property type="match status" value="1"/>
</dbReference>
<dbReference type="SUPFAM" id="SSF46565">
    <property type="entry name" value="Chaperone J-domain"/>
    <property type="match status" value="1"/>
</dbReference>
<dbReference type="SUPFAM" id="SSF57938">
    <property type="entry name" value="DnaJ/Hsp40 cysteine-rich domain"/>
    <property type="match status" value="1"/>
</dbReference>
<dbReference type="SUPFAM" id="SSF49493">
    <property type="entry name" value="HSP40/DnaJ peptide-binding domain"/>
    <property type="match status" value="2"/>
</dbReference>
<dbReference type="PROSITE" id="PS00636">
    <property type="entry name" value="DNAJ_1"/>
    <property type="match status" value="1"/>
</dbReference>
<dbReference type="PROSITE" id="PS50076">
    <property type="entry name" value="DNAJ_2"/>
    <property type="match status" value="1"/>
</dbReference>
<dbReference type="PROSITE" id="PS51188">
    <property type="entry name" value="ZF_CR"/>
    <property type="match status" value="1"/>
</dbReference>
<protein>
    <recommendedName>
        <fullName evidence="1">Chaperone protein DnaJ</fullName>
    </recommendedName>
</protein>
<keyword id="KW-0143">Chaperone</keyword>
<keyword id="KW-0963">Cytoplasm</keyword>
<keyword id="KW-0235">DNA replication</keyword>
<keyword id="KW-0479">Metal-binding</keyword>
<keyword id="KW-1185">Reference proteome</keyword>
<keyword id="KW-0677">Repeat</keyword>
<keyword id="KW-0346">Stress response</keyword>
<keyword id="KW-0862">Zinc</keyword>
<keyword id="KW-0863">Zinc-finger</keyword>
<evidence type="ECO:0000255" key="1">
    <source>
        <dbReference type="HAMAP-Rule" id="MF_01152"/>
    </source>
</evidence>
<name>DNAJ_RUEPO</name>